<evidence type="ECO:0000250" key="1">
    <source>
        <dbReference type="UniProtKB" id="O09032"/>
    </source>
</evidence>
<evidence type="ECO:0000250" key="2">
    <source>
        <dbReference type="UniProtKB" id="P26378"/>
    </source>
</evidence>
<evidence type="ECO:0000255" key="3">
    <source>
        <dbReference type="PROSITE-ProRule" id="PRU00176"/>
    </source>
</evidence>
<evidence type="ECO:0000256" key="4">
    <source>
        <dbReference type="SAM" id="MobiDB-lite"/>
    </source>
</evidence>
<evidence type="ECO:0000269" key="5">
    <source>
    </source>
</evidence>
<evidence type="ECO:0000269" key="6">
    <source>
    </source>
</evidence>
<evidence type="ECO:0000269" key="7">
    <source>
    </source>
</evidence>
<evidence type="ECO:0000269" key="8">
    <source>
    </source>
</evidence>
<evidence type="ECO:0000269" key="9">
    <source>
    </source>
</evidence>
<evidence type="ECO:0000269" key="10">
    <source>
    </source>
</evidence>
<evidence type="ECO:0000269" key="11">
    <source>
    </source>
</evidence>
<evidence type="ECO:0000269" key="12">
    <source>
    </source>
</evidence>
<evidence type="ECO:0000269" key="13">
    <source>
    </source>
</evidence>
<evidence type="ECO:0000269" key="14">
    <source>
    </source>
</evidence>
<evidence type="ECO:0000269" key="15">
    <source>
    </source>
</evidence>
<evidence type="ECO:0000269" key="16">
    <source>
    </source>
</evidence>
<evidence type="ECO:0000269" key="17">
    <source>
    </source>
</evidence>
<evidence type="ECO:0000269" key="18">
    <source>
    </source>
</evidence>
<evidence type="ECO:0000269" key="19">
    <source>
    </source>
</evidence>
<evidence type="ECO:0000269" key="20">
    <source>
    </source>
</evidence>
<evidence type="ECO:0000269" key="21">
    <source>
    </source>
</evidence>
<evidence type="ECO:0000269" key="22">
    <source>
    </source>
</evidence>
<evidence type="ECO:0000269" key="23">
    <source>
    </source>
</evidence>
<evidence type="ECO:0000269" key="24">
    <source>
    </source>
</evidence>
<evidence type="ECO:0000269" key="25">
    <source>
    </source>
</evidence>
<evidence type="ECO:0000303" key="26">
    <source>
    </source>
</evidence>
<evidence type="ECO:0000303" key="27">
    <source>
    </source>
</evidence>
<evidence type="ECO:0000303" key="28">
    <source>
    </source>
</evidence>
<evidence type="ECO:0000305" key="29"/>
<evidence type="ECO:0000312" key="30">
    <source>
        <dbReference type="EMBL" id="BAC37532.1"/>
    </source>
</evidence>
<evidence type="ECO:0007744" key="31">
    <source>
    </source>
</evidence>
<gene>
    <name type="primary">Elavl4</name>
    <name type="synonym">Hud</name>
</gene>
<reference key="1">
    <citation type="journal article" date="1994" name="DNA Res.">
        <title>Tissue-specific expression of the gene encoding a mouse RNA binding protein homologous to human HuD antigen.</title>
        <authorList>
            <person name="Abe R."/>
            <person name="Uyeno Y."/>
            <person name="Yamamoto K."/>
            <person name="Sakamoto H."/>
        </authorList>
    </citation>
    <scope>NUCLEOTIDE SEQUENCE [MRNA] (ISOFORM 1)</scope>
    <scope>TISSUE SPECIFICITY</scope>
    <source>
        <tissue>Brain</tissue>
    </source>
</reference>
<reference key="2">
    <citation type="journal article" date="1997" name="J. Neurosci.">
        <title>A hierarchy of Hu RNA binding proteins in developing and adult neurons.</title>
        <authorList>
            <person name="Okano H.J."/>
            <person name="Darnell R.B."/>
        </authorList>
    </citation>
    <scope>NUCLEOTIDE SEQUENCE [MRNA] (ISOFORMS 3 AND 4)</scope>
    <scope>ALTERNATIVE SPLICING</scope>
    <scope>TISSUE SPECIFICITY</scope>
    <scope>DEVELOPMENTAL STAGE</scope>
</reference>
<reference key="3">
    <citation type="journal article" date="1998" name="Gene">
        <title>Gene organization and chromosome location of the neural-specific RNA binding protein Elavl4.</title>
        <authorList>
            <person name="Inman M.V."/>
            <person name="Levy S."/>
            <person name="Mock B.A."/>
            <person name="Owens G.C."/>
        </authorList>
    </citation>
    <scope>NUCLEOTIDE SEQUENCE [MRNA] (ISOFORM 2)</scope>
    <source>
        <strain>ICR</strain>
    </source>
</reference>
<reference key="4">
    <citation type="journal article" date="2005" name="Science">
        <title>The transcriptional landscape of the mammalian genome.</title>
        <authorList>
            <person name="Carninci P."/>
            <person name="Kasukawa T."/>
            <person name="Katayama S."/>
            <person name="Gough J."/>
            <person name="Frith M.C."/>
            <person name="Maeda N."/>
            <person name="Oyama R."/>
            <person name="Ravasi T."/>
            <person name="Lenhard B."/>
            <person name="Wells C."/>
            <person name="Kodzius R."/>
            <person name="Shimokawa K."/>
            <person name="Bajic V.B."/>
            <person name="Brenner S.E."/>
            <person name="Batalov S."/>
            <person name="Forrest A.R."/>
            <person name="Zavolan M."/>
            <person name="Davis M.J."/>
            <person name="Wilming L.G."/>
            <person name="Aidinis V."/>
            <person name="Allen J.E."/>
            <person name="Ambesi-Impiombato A."/>
            <person name="Apweiler R."/>
            <person name="Aturaliya R.N."/>
            <person name="Bailey T.L."/>
            <person name="Bansal M."/>
            <person name="Baxter L."/>
            <person name="Beisel K.W."/>
            <person name="Bersano T."/>
            <person name="Bono H."/>
            <person name="Chalk A.M."/>
            <person name="Chiu K.P."/>
            <person name="Choudhary V."/>
            <person name="Christoffels A."/>
            <person name="Clutterbuck D.R."/>
            <person name="Crowe M.L."/>
            <person name="Dalla E."/>
            <person name="Dalrymple B.P."/>
            <person name="de Bono B."/>
            <person name="Della Gatta G."/>
            <person name="di Bernardo D."/>
            <person name="Down T."/>
            <person name="Engstrom P."/>
            <person name="Fagiolini M."/>
            <person name="Faulkner G."/>
            <person name="Fletcher C.F."/>
            <person name="Fukushima T."/>
            <person name="Furuno M."/>
            <person name="Futaki S."/>
            <person name="Gariboldi M."/>
            <person name="Georgii-Hemming P."/>
            <person name="Gingeras T.R."/>
            <person name="Gojobori T."/>
            <person name="Green R.E."/>
            <person name="Gustincich S."/>
            <person name="Harbers M."/>
            <person name="Hayashi Y."/>
            <person name="Hensch T.K."/>
            <person name="Hirokawa N."/>
            <person name="Hill D."/>
            <person name="Huminiecki L."/>
            <person name="Iacono M."/>
            <person name="Ikeo K."/>
            <person name="Iwama A."/>
            <person name="Ishikawa T."/>
            <person name="Jakt M."/>
            <person name="Kanapin A."/>
            <person name="Katoh M."/>
            <person name="Kawasawa Y."/>
            <person name="Kelso J."/>
            <person name="Kitamura H."/>
            <person name="Kitano H."/>
            <person name="Kollias G."/>
            <person name="Krishnan S.P."/>
            <person name="Kruger A."/>
            <person name="Kummerfeld S.K."/>
            <person name="Kurochkin I.V."/>
            <person name="Lareau L.F."/>
            <person name="Lazarevic D."/>
            <person name="Lipovich L."/>
            <person name="Liu J."/>
            <person name="Liuni S."/>
            <person name="McWilliam S."/>
            <person name="Madan Babu M."/>
            <person name="Madera M."/>
            <person name="Marchionni L."/>
            <person name="Matsuda H."/>
            <person name="Matsuzawa S."/>
            <person name="Miki H."/>
            <person name="Mignone F."/>
            <person name="Miyake S."/>
            <person name="Morris K."/>
            <person name="Mottagui-Tabar S."/>
            <person name="Mulder N."/>
            <person name="Nakano N."/>
            <person name="Nakauchi H."/>
            <person name="Ng P."/>
            <person name="Nilsson R."/>
            <person name="Nishiguchi S."/>
            <person name="Nishikawa S."/>
            <person name="Nori F."/>
            <person name="Ohara O."/>
            <person name="Okazaki Y."/>
            <person name="Orlando V."/>
            <person name="Pang K.C."/>
            <person name="Pavan W.J."/>
            <person name="Pavesi G."/>
            <person name="Pesole G."/>
            <person name="Petrovsky N."/>
            <person name="Piazza S."/>
            <person name="Reed J."/>
            <person name="Reid J.F."/>
            <person name="Ring B.Z."/>
            <person name="Ringwald M."/>
            <person name="Rost B."/>
            <person name="Ruan Y."/>
            <person name="Salzberg S.L."/>
            <person name="Sandelin A."/>
            <person name="Schneider C."/>
            <person name="Schoenbach C."/>
            <person name="Sekiguchi K."/>
            <person name="Semple C.A."/>
            <person name="Seno S."/>
            <person name="Sessa L."/>
            <person name="Sheng Y."/>
            <person name="Shibata Y."/>
            <person name="Shimada H."/>
            <person name="Shimada K."/>
            <person name="Silva D."/>
            <person name="Sinclair B."/>
            <person name="Sperling S."/>
            <person name="Stupka E."/>
            <person name="Sugiura K."/>
            <person name="Sultana R."/>
            <person name="Takenaka Y."/>
            <person name="Taki K."/>
            <person name="Tammoja K."/>
            <person name="Tan S.L."/>
            <person name="Tang S."/>
            <person name="Taylor M.S."/>
            <person name="Tegner J."/>
            <person name="Teichmann S.A."/>
            <person name="Ueda H.R."/>
            <person name="van Nimwegen E."/>
            <person name="Verardo R."/>
            <person name="Wei C.L."/>
            <person name="Yagi K."/>
            <person name="Yamanishi H."/>
            <person name="Zabarovsky E."/>
            <person name="Zhu S."/>
            <person name="Zimmer A."/>
            <person name="Hide W."/>
            <person name="Bult C."/>
            <person name="Grimmond S.M."/>
            <person name="Teasdale R.D."/>
            <person name="Liu E.T."/>
            <person name="Brusic V."/>
            <person name="Quackenbush J."/>
            <person name="Wahlestedt C."/>
            <person name="Mattick J.S."/>
            <person name="Hume D.A."/>
            <person name="Kai C."/>
            <person name="Sasaki D."/>
            <person name="Tomaru Y."/>
            <person name="Fukuda S."/>
            <person name="Kanamori-Katayama M."/>
            <person name="Suzuki M."/>
            <person name="Aoki J."/>
            <person name="Arakawa T."/>
            <person name="Iida J."/>
            <person name="Imamura K."/>
            <person name="Itoh M."/>
            <person name="Kato T."/>
            <person name="Kawaji H."/>
            <person name="Kawagashira N."/>
            <person name="Kawashima T."/>
            <person name="Kojima M."/>
            <person name="Kondo S."/>
            <person name="Konno H."/>
            <person name="Nakano K."/>
            <person name="Ninomiya N."/>
            <person name="Nishio T."/>
            <person name="Okada M."/>
            <person name="Plessy C."/>
            <person name="Shibata K."/>
            <person name="Shiraki T."/>
            <person name="Suzuki S."/>
            <person name="Tagami M."/>
            <person name="Waki K."/>
            <person name="Watahiki A."/>
            <person name="Okamura-Oho Y."/>
            <person name="Suzuki H."/>
            <person name="Kawai J."/>
            <person name="Hayashizaki Y."/>
        </authorList>
    </citation>
    <scope>NUCLEOTIDE SEQUENCE [LARGE SCALE MRNA]</scope>
    <scope>IDENTIFICATION BY MASS SPECTROMETRY [LARGE SCALE ANALYSIS]</scope>
    <source>
        <strain evidence="30">C57BL/6J</strain>
        <tissue evidence="30">Diencephalon</tissue>
    </source>
</reference>
<reference key="5">
    <citation type="journal article" date="2009" name="PLoS Biol.">
        <title>Lineage-specific biology revealed by a finished genome assembly of the mouse.</title>
        <authorList>
            <person name="Church D.M."/>
            <person name="Goodstadt L."/>
            <person name="Hillier L.W."/>
            <person name="Zody M.C."/>
            <person name="Goldstein S."/>
            <person name="She X."/>
            <person name="Bult C.J."/>
            <person name="Agarwala R."/>
            <person name="Cherry J.L."/>
            <person name="DiCuccio M."/>
            <person name="Hlavina W."/>
            <person name="Kapustin Y."/>
            <person name="Meric P."/>
            <person name="Maglott D."/>
            <person name="Birtle Z."/>
            <person name="Marques A.C."/>
            <person name="Graves T."/>
            <person name="Zhou S."/>
            <person name="Teague B."/>
            <person name="Potamousis K."/>
            <person name="Churas C."/>
            <person name="Place M."/>
            <person name="Herschleb J."/>
            <person name="Runnheim R."/>
            <person name="Forrest D."/>
            <person name="Amos-Landgraf J."/>
            <person name="Schwartz D.C."/>
            <person name="Cheng Z."/>
            <person name="Lindblad-Toh K."/>
            <person name="Eichler E.E."/>
            <person name="Ponting C.P."/>
        </authorList>
    </citation>
    <scope>NUCLEOTIDE SEQUENCE [LARGE SCALE GENOMIC DNA]</scope>
    <source>
        <strain>C57BL/6J</strain>
    </source>
</reference>
<reference key="6">
    <citation type="journal article" date="2012" name="J. Neurosci.">
        <title>Characterization of multiple exon 1 variants in mammalian HuD mRNA and neuron-specific transcriptional control via neurogenin 2.</title>
        <authorList>
            <person name="Bronicki L.M."/>
            <person name="Belanger G."/>
            <person name="Jasmin B.J."/>
        </authorList>
    </citation>
    <scope>PARTIAL NUCLEOTIDE SEQUENCE [MRNA] (ISOFORMS 3; 5; 6; 7; 8; 9 AND 10)</scope>
    <scope>ALTERNATIVE INITIATION</scope>
    <scope>TISSUE SPECIFICITY</scope>
    <scope>DEVELOPMENTAL STAGE</scope>
</reference>
<reference key="7">
    <citation type="journal article" date="2001" name="Proc. Natl. Acad. Sci. U.S.A.">
        <title>Posttranscriptional regulation of gene expression in learning by the neuronal ELAV-like mRNA-stabilizing proteins.</title>
        <authorList>
            <person name="Quattrone A."/>
            <person name="Pascale A."/>
            <person name="Nogues X."/>
            <person name="Zhao W."/>
            <person name="Gusev P."/>
            <person name="Pacini A."/>
            <person name="Alkon D.L."/>
        </authorList>
    </citation>
    <scope>TISSUE SPECIFICITY</scope>
    <scope>INDUCTION BY MEMORY TRAINING</scope>
</reference>
<reference key="8">
    <citation type="journal article" date="2004" name="J. Neurochem.">
        <title>The insulin-like growth factor mRNA binding-protein IMP-1 and the Ras-regulatory protein G3BP associate with tau mRNA and HuD protein in differentiated P19 neuronal cells.</title>
        <authorList>
            <person name="Atlas R."/>
            <person name="Behar L."/>
            <person name="Elliott E."/>
            <person name="Ginzburg I."/>
        </authorList>
    </citation>
    <scope>IDENTIFICATION IN A MRNP COMPLEX WITH IGF2BP1 AND G3BP</scope>
    <scope>INTERACTION WITH IGF2BP1</scope>
</reference>
<reference key="9">
    <citation type="journal article" date="2004" name="Neurosci. Lett.">
        <title>Dendritic localization of the RNA-binding protein HuD in hippocampal neurons: association with polysomes and upregulation during contextual learning.</title>
        <authorList>
            <person name="Bolognani F."/>
            <person name="Merhege M.A."/>
            <person name="Twiss J."/>
            <person name="Perrone-Bizzozero N.I."/>
        </authorList>
    </citation>
    <scope>TISSUE SPECIFICITY</scope>
</reference>
<reference key="10">
    <citation type="journal article" date="2005" name="Proc. Natl. Acad. Sci. U.S.A.">
        <title>The RNA-binding protein HuD regulates neuronal cell identity and maturation.</title>
        <authorList>
            <person name="Akamatsu W."/>
            <person name="Fujihara H."/>
            <person name="Mitsuhashi T."/>
            <person name="Yano M."/>
            <person name="Shibata S."/>
            <person name="Hayakawa Y."/>
            <person name="Okano H.J."/>
            <person name="Sakakibara S."/>
            <person name="Takano H."/>
            <person name="Takano T."/>
            <person name="Takahashi T."/>
            <person name="Noda T."/>
            <person name="Okano H."/>
        </authorList>
    </citation>
    <scope>FUNCTION</scope>
    <scope>TISSUE SPECIFICITY</scope>
    <scope>DISRUPTION PHENOTYPE</scope>
</reference>
<reference key="11">
    <citation type="journal article" date="2006" name="J. Cell Sci.">
        <title>A role for the ELAV RNA-binding proteins in neural stem cells: stabilization of Msi1 mRNA.</title>
        <authorList>
            <person name="Ratti A."/>
            <person name="Fallini C."/>
            <person name="Cova L."/>
            <person name="Fantozzi R."/>
            <person name="Calzarossa C."/>
            <person name="Zennaro E."/>
            <person name="Pascale A."/>
            <person name="Quattrone A."/>
            <person name="Silani V."/>
        </authorList>
    </citation>
    <scope>FUNCTION</scope>
    <scope>SUBCELLULAR LOCATION</scope>
    <scope>TISSUE SPECIFICITY</scope>
</reference>
<reference key="12">
    <citation type="journal article" date="2006" name="Mol. Biol. Cell">
        <title>A nuclear function of Hu proteins as neuron-specific alternative RNA processing regulators.</title>
        <authorList>
            <person name="Zhu H."/>
            <person name="Hasman R.A."/>
            <person name="Barron V.A."/>
            <person name="Luo G."/>
            <person name="Lou H."/>
        </authorList>
    </citation>
    <scope>FUNCTION</scope>
</reference>
<reference key="13">
    <citation type="journal article" date="2008" name="Hippocampus">
        <title>Alterations in mossy fiber physiology and GAP-43 expression and function in transgenic mice overexpressing HuD.</title>
        <authorList>
            <person name="Tanner D.C."/>
            <person name="Qiu S."/>
            <person name="Bolognani F."/>
            <person name="Partridge L.D."/>
            <person name="Weeber E.J."/>
            <person name="Perrone-Bizzozero N.I."/>
        </authorList>
    </citation>
    <scope>TISSUE SPECIFICITY</scope>
</reference>
<reference key="14">
    <citation type="journal article" date="2008" name="J. Biol. Chem.">
        <title>Post-transcriptional regulation of neuro-oncological ventral antigen 1 by the neuronal RNA-binding proteins ELAV.</title>
        <authorList>
            <person name="Ratti A."/>
            <person name="Fallini C."/>
            <person name="Colombrita C."/>
            <person name="Pascale A."/>
            <person name="Laforenza U."/>
            <person name="Quattrone A."/>
            <person name="Silani V."/>
        </authorList>
    </citation>
    <scope>FUNCTION</scope>
</reference>
<reference key="15">
    <citation type="journal article" date="2009" name="Mol. Cell">
        <title>The ELAV protein HuD stimulates cap-dependent translation in a Poly(A)- and eIF4A-dependent manner.</title>
        <authorList>
            <person name="Fukao A."/>
            <person name="Sasano Y."/>
            <person name="Imataka H."/>
            <person name="Inoue K."/>
            <person name="Sakamoto H."/>
            <person name="Sonenberg N."/>
            <person name="Thoma C."/>
            <person name="Fujiwara T."/>
        </authorList>
    </citation>
    <scope>FUNCTION</scope>
    <scope>INTERACTION WITH ELF4</scope>
    <scope>DOMAIN</scope>
    <scope>MUTAGENESIS OF ARG-277; PHE-278; SER-279; PRO-280 AND 303-CYS--SER-385</scope>
</reference>
<reference key="16">
    <citation type="journal article" date="2010" name="Cell">
        <title>A tissue-specific atlas of mouse protein phosphorylation and expression.</title>
        <authorList>
            <person name="Huttlin E.L."/>
            <person name="Jedrychowski M.P."/>
            <person name="Elias J.E."/>
            <person name="Goswami T."/>
            <person name="Rad R."/>
            <person name="Beausoleil S.A."/>
            <person name="Villen J."/>
            <person name="Haas W."/>
            <person name="Sowa M.E."/>
            <person name="Gygi S.P."/>
        </authorList>
    </citation>
    <scope>PHOSPHORYLATION [LARGE SCALE ANALYSIS] AT SER-38 AND SER-233</scope>
    <scope>IDENTIFICATION BY MASS SPECTROMETRY [LARGE SCALE ANALYSIS]</scope>
    <source>
        <tissue>Brain</tissue>
    </source>
</reference>
<reference key="17">
    <citation type="journal article" date="2011" name="Biochimie">
        <title>Microtubule association of a neuronal RNA-binding protein HuD through its binding to the light chain of MAP1B.</title>
        <authorList>
            <person name="Fujiwara Y."/>
            <person name="Kasashima K."/>
            <person name="Saito K."/>
            <person name="Fukuda M."/>
            <person name="Fukao A."/>
            <person name="Sasano Y."/>
            <person name="Inoue K."/>
            <person name="Fujiwara T."/>
            <person name="Sakamoto H."/>
        </authorList>
    </citation>
    <scope>INTERACTION WITH MAP1 LIGHT CHAIN LC1 AND MAP1 LIGHT CHAIN LC2</scope>
    <scope>SUBCELLULAR LOCATION</scope>
</reference>
<reference key="18">
    <citation type="journal article" date="2011" name="J. Neurosci.">
        <title>The survival of motor neuron (SMN) protein interacts with the mRNA-binding protein HuD and regulates localization of poly(A) mRNA in primary motor neuron axons.</title>
        <authorList>
            <person name="Fallini C."/>
            <person name="Zhang H."/>
            <person name="Su Y."/>
            <person name="Silani V."/>
            <person name="Singer R.H."/>
            <person name="Rossoll W."/>
            <person name="Bassell G.J."/>
        </authorList>
    </citation>
    <scope>SUBCELLULAR LOCATION</scope>
    <scope>TISSUE SPECIFICITY</scope>
</reference>
<reference key="19">
    <citation type="journal article" date="2012" name="Mol. Cell">
        <title>RNA-binding protein HuD controls insulin translation.</title>
        <authorList>
            <person name="Lee E.K."/>
            <person name="Kim W."/>
            <person name="Tominaga K."/>
            <person name="Martindale J.L."/>
            <person name="Yang X."/>
            <person name="Subaran S.S."/>
            <person name="Carlson O.D."/>
            <person name="Mercken E.M."/>
            <person name="Kulkarni R.N."/>
            <person name="Akamatsu W."/>
            <person name="Okano H."/>
            <person name="Perrone-Bizzozero N.I."/>
            <person name="de Cabo R."/>
            <person name="Egan J.M."/>
            <person name="Gorospe M."/>
        </authorList>
    </citation>
    <scope>FUNCTION</scope>
    <scope>SUBCELLULAR LOCATION</scope>
    <scope>TISSUE SPECIFICITY</scope>
    <scope>INDUCTION BY GLUCOSE AND BY INSULIN</scope>
    <scope>DISRUPTION PHENOTYPE</scope>
</reference>
<reference key="20">
    <citation type="journal article" date="2013" name="PLoS ONE">
        <title>HuD promotes BDNF expression in brain neurons via selective stabilization of the BDNF long 3'UTR mRNA.</title>
        <authorList>
            <person name="Allen M."/>
            <person name="Bird C."/>
            <person name="Feng W."/>
            <person name="Liu G."/>
            <person name="Li W."/>
            <person name="Perrone-Bizzozero N.I."/>
            <person name="Feng Y."/>
        </authorList>
    </citation>
    <scope>FUNCTION</scope>
</reference>
<reference key="21">
    <citation type="journal article" date="2014" name="Cell Rep.">
        <title>HuD regulates coding and noncoding RNA to induce APP[?]Abeta processing.</title>
        <authorList>
            <person name="Kang M.J."/>
            <person name="Abdelmohsen K."/>
            <person name="Hutchison E.R."/>
            <person name="Mitchell S.J."/>
            <person name="Grammatikakis I."/>
            <person name="Guo R."/>
            <person name="Noh J.H."/>
            <person name="Martindale J.L."/>
            <person name="Yang X."/>
            <person name="Lee E.K."/>
            <person name="Faghihi M.A."/>
            <person name="Wahlestedt C."/>
            <person name="Troncoso J.C."/>
            <person name="Pletnikova O."/>
            <person name="Perrone-Bizzozero N."/>
            <person name="Resnick S.M."/>
            <person name="de Cabo R."/>
            <person name="Mattson M.P."/>
            <person name="Gorospe M."/>
        </authorList>
    </citation>
    <scope>TISSUE SPECIFICITY</scope>
</reference>
<reference key="22">
    <citation type="journal article" date="2014" name="J. Neurosci.">
        <title>Prenatal deletion of the RNA-binding protein HuD disrupts postnatal cortical circuit maturation and behavior.</title>
        <authorList>
            <person name="DeBoer E.M."/>
            <person name="Azevedo R."/>
            <person name="Vega T.A."/>
            <person name="Brodkin J."/>
            <person name="Akamatsu W."/>
            <person name="Okano H."/>
            <person name="Wagner G.C."/>
            <person name="Rasin M.R."/>
        </authorList>
    </citation>
    <scope>FUNCTION</scope>
    <scope>TISSUE SPECIFICITY</scope>
    <scope>DEVELOPMENTAL STAGE</scope>
    <scope>DISRUPTION PHENOTYPE</scope>
</reference>
<reference key="23">
    <citation type="journal article" date="2015" name="PLoS ONE">
        <title>HuD interacts with Bdnf mRNA and is essential for activity-induced BDNF synthesis in dendrites.</title>
        <authorList>
            <person name="Vanevski F."/>
            <person name="Xu B."/>
        </authorList>
    </citation>
    <scope>FUNCTION</scope>
    <scope>SUBCELLULAR LOCATION</scope>
    <scope>MUTAGENESIS OF THR-149 AND THR-165</scope>
</reference>
<reference key="24">
    <citation type="journal article" date="2015" name="Proc. Natl. Acad. Sci. U.S.A.">
        <title>Positive feedback between RNA-binding protein HuD and transcription factor SATB1 promotes neurogenesis.</title>
        <authorList>
            <person name="Wang F."/>
            <person name="Tidei J.J."/>
            <person name="Polich E.D."/>
            <person name="Gao Y."/>
            <person name="Zhao H."/>
            <person name="Perrone-Bizzozero N.I."/>
            <person name="Guo W."/>
            <person name="Zhao X."/>
        </authorList>
    </citation>
    <scope>FUNCTION</scope>
    <scope>TISSUE SPECIFICITY</scope>
    <scope>INDUCTION BY DIFFERENTIATION</scope>
    <scope>DISRUPTION PHENOTYPE</scope>
</reference>
<reference key="25">
    <citation type="journal article" date="2017" name="Brain Res.">
        <title>HuD-mediated distinct BDNF regulatory pathways promote regeneration after nerve injury.</title>
        <authorList>
            <person name="Sanna M.D."/>
            <person name="Ghelardini C."/>
            <person name="Galeotti N."/>
        </authorList>
    </citation>
    <scope>FUNCTION</scope>
    <scope>TISSUE SPECIFICITY</scope>
    <scope>INDUCTION BY NERVE INJURY</scope>
</reference>
<organism>
    <name type="scientific">Mus musculus</name>
    <name type="common">Mouse</name>
    <dbReference type="NCBI Taxonomy" id="10090"/>
    <lineage>
        <taxon>Eukaryota</taxon>
        <taxon>Metazoa</taxon>
        <taxon>Chordata</taxon>
        <taxon>Craniata</taxon>
        <taxon>Vertebrata</taxon>
        <taxon>Euteleostomi</taxon>
        <taxon>Mammalia</taxon>
        <taxon>Eutheria</taxon>
        <taxon>Euarchontoglires</taxon>
        <taxon>Glires</taxon>
        <taxon>Rodentia</taxon>
        <taxon>Myomorpha</taxon>
        <taxon>Muroidea</taxon>
        <taxon>Muridae</taxon>
        <taxon>Murinae</taxon>
        <taxon>Mus</taxon>
        <taxon>Mus</taxon>
    </lineage>
</organism>
<keyword id="KW-0024">Alternative initiation</keyword>
<keyword id="KW-0025">Alternative splicing</keyword>
<keyword id="KW-0966">Cell projection</keyword>
<keyword id="KW-0963">Cytoplasm</keyword>
<keyword id="KW-0488">Methylation</keyword>
<keyword id="KW-0507">mRNA processing</keyword>
<keyword id="KW-0508">mRNA splicing</keyword>
<keyword id="KW-0597">Phosphoprotein</keyword>
<keyword id="KW-1185">Reference proteome</keyword>
<keyword id="KW-0677">Repeat</keyword>
<keyword id="KW-0694">RNA-binding</keyword>
<proteinExistence type="evidence at protein level"/>
<comment type="function">
    <text evidence="1 2 8 9 10 11 13 16 18 19 21 22 23">RNA-binding protein that is involved in the post-transcriptional regulation of mRNAs (PubMed:15764704, PubMed:16554442, PubMed:17035636, PubMed:20064466, PubMed:22387028, PubMed:23383270, PubMed:26305964, PubMed:28111162). Plays a role in the regulation of mRNA stability, alternative splicing and translation (PubMed:15764704, PubMed:23383270, PubMed:26305964, PubMed:28111162). Binds to AU-rich element (ARE) sequences in the 3' untranslated region (3'UTR) of target mRNAs, including GAP43, VEGF, FOS, CDKN1A and ACHE mRNA (By similarity). Many of the target mRNAs are coding for RNA-binding proteins, transcription factors and proteins involved in RNA processing and/or neuronal development and function (PubMed:26305964). By binding to the mRNA 3'UTR, decreases mRNA deadenylation and thereby contributes to the stabilization of mRNA molecules and their protection from decay (By similarity). Also binds to the polyadenylated (poly(A)) tail in the 3'UTR of mRNA, thereby increasing its affinity for mRNA binding (PubMed:20064466). Mainly plays a role in neuron-specific RNA processing by stabilization of mRNAs such as GAP43, ACHE and mRNAs of other neuronal proteins, thereby contributing to the differentiation of neural progenitor cells, nervous system development, learning and memory mechanisms (PubMed:15764704, PubMed:16554442, PubMed:18218628, PubMed:23383270, PubMed:24599466, PubMed:25692578, PubMed:26305964, PubMed:28111162). Involved in the negative regulation of the proliferative activity of neuronal stem cells and in the positive regulation of neuronal differentiation of neural progenitor cells (PubMed:15764704). Promotes neuronal differentiation of neural stem/progenitor cells in the adult subventricular zone of the hippocampus by binding to and stabilizing SATB1 mRNA (PubMed:26305964). Binds and stabilizes MSI1 mRNA in neural stem cells (PubMed:16554442). Exhibits increased binding to ACHE mRNA during neuronal differentiation, thereby stabilizing ACHE mRNA and enhancing its expression (By similarity). Protects CDKN1A mRNA from decay by binding to its 3'-UTR (By similarity). May bind to APP and BACE1 mRNAS and the BACE1AS lncRNA and enhance their stabilization (By similarity). Plays a role in neurite outgrowth and in the establishment and maturation of dendritic arbors, thereby contributing to neocortical and hippocampal circuitry function (PubMed:24599466). Stabilizes GAP43 mRNA and protects it from decay during postembryonic development in the brain (PubMed:28111162). By promoting the stabilization of GAP43 mRNA, plays a role in NGF-mediated neurite outgrowth (By similarity). Binds to BDNF long 3'UTR mRNA, thereby leading to its stabilization and increased dendritic translation after activation of PKC (PubMed:23383270, PubMed:25692578). By increasing translation of BDNF after nerve injury, may contribute to nerve regeneration (PubMed:28111162). Acts as a stabilizing factor by binding to the 3'UTR of NOVA1 mRNA, thereby increasing its translation and enhancing its functional activity in neuron-specific splicing (PubMed:18218628). Stimulates translation of mRNA in a poly(A)- and cap-dependent manner, possibly by associating with the EIF4F cap-binding complex (PubMed:20064466). May also negatively regulate translation by binding to the 5'UTR of Ins2 mRNA, thereby repressing its translation (PubMed:22387028). Upon glucose stimulation, Ins2 mRNA is released from ELAVL4 and translational inhibition is abolished (PubMed:22387028). Also plays a role in the regulation of alternative splicing (PubMed:17035636). May regulate alternative splicing of CALCA pre-mRNA into Calcitonin and Calcitonin gene-related peptide 1 (CGRP) by competing with splicing regulator TIAR for binding to U-rich sequences of CALCA pre-mRNA (PubMed:17035636).</text>
</comment>
<comment type="subunit">
    <text evidence="2 6 13 14">Component of a TAU mRNP complex, at least composed of IGF2BP1, ELAVL4 and G3BP (PubMed:15086518). Associates with the EIF4F cap-binding complex, composed of EIF4G, EIF4A, EIF4E and PABP (PubMed:20064466). Within the EIF4F cap-binding complex, interacts with EIF4A (PubMed:20064466). Interacts with SMN (via Tudor domain) in an RNA-independent manner; the interaction is required for localization of ELAVL4 to RNA granules (By similarity). Interacts with MAP1 light chain LC1 (via C-terminus); the interaction contributes to the association of ELAVL4 with microtubules (PubMed:21288476). Interacts with MAP1 light chain LC2 (PubMed:21288476).</text>
</comment>
<comment type="subcellular location">
    <subcellularLocation>
        <location evidence="9 14 16">Cytoplasm</location>
    </subcellularLocation>
    <subcellularLocation>
        <location evidence="15">Perikaryon</location>
    </subcellularLocation>
    <subcellularLocation>
        <location evidence="21">Cell projection</location>
        <location evidence="21">Dendrite</location>
    </subcellularLocation>
    <subcellularLocation>
        <location evidence="15">Cell projection</location>
        <location evidence="15">Axon</location>
    </subcellularLocation>
    <subcellularLocation>
        <location evidence="15">Cell projection</location>
        <location evidence="15">Growth cone</location>
    </subcellularLocation>
    <text evidence="1">Co-localizes with ribosomal RNA in polysomes.</text>
</comment>
<comment type="alternative products">
    <event type="alternative splicing"/>
    <event type="alternative initiation"/>
    <isoform>
        <id>Q61701-1</id>
        <name>1</name>
        <name>Long</name>
        <sequence type="displayed"/>
    </isoform>
    <isoform>
        <id>Q61701-2</id>
        <name>2</name>
        <name>Short</name>
        <sequence type="described" ref="VSP_005792"/>
    </isoform>
    <isoform>
        <id>Q61701-4</id>
        <name>3</name>
        <name evidence="27">sv1</name>
        <name evidence="26">E1b</name>
        <sequence type="described" ref="VSP_060287"/>
    </isoform>
    <isoform>
        <id>Q61701-5</id>
        <name>4</name>
        <name evidence="27">sv2</name>
        <sequence type="described" ref="VSP_060287 VSP_060290"/>
    </isoform>
    <isoform>
        <id>Q61701-6</id>
        <name>5</name>
        <name evidence="26">E1a</name>
        <sequence type="described" ref="VSP_060284 VSP_005792"/>
    </isoform>
    <isoform>
        <id>Q61701-7</id>
        <name>6</name>
        <name evidence="26">E1a1</name>
        <sequence type="described" ref="VSP_060285 VSP_060290"/>
    </isoform>
    <isoform>
        <id>Q61701-8</id>
        <name>7</name>
        <name evidence="26">E1a2</name>
        <sequence type="described" ref="VSP_060286 VSP_060289"/>
    </isoform>
    <isoform>
        <id>Q61701-9</id>
        <name>8</name>
        <name evidence="26">E1a3</name>
        <sequence type="described" ref="VSP_060288 VSP_060290"/>
    </isoform>
    <isoform>
        <id>Q61701-10</id>
        <name>9</name>
        <name evidence="26">E1c</name>
        <sequence type="described" ref="VSP_060290"/>
    </isoform>
    <isoform>
        <id>Q61701-11</id>
        <name>10</name>
        <name evidence="26">E1c1</name>
        <sequence type="described" ref="VSP_060291"/>
    </isoform>
</comment>
<comment type="tissue specificity">
    <text evidence="5 7 8 9 10 12 15 16 17 19 20 22 23 24 25">Expressed in the brain, including the hippocampus, and in pancreatic beta cells (at protein level) (PubMed:15764704, PubMed:18493953, PubMed:22387028, PubMed:24599466). Expressed in pyramidal neurons of the hippocampal CA3 and CA1 region and in the hilus but not in dentate granule cells (at protein level) (PubMed:15519747). Expressed in the dorsal root ganglion and the spinal cord (at protein level) (PubMed:17035636, PubMed:28111162). Expressed in neural stem and progenitor cells (at protein level) (PubMed:16554442). Expressed in radial glia-like cells and in transient amplifying cells in the subventricular zone (SVZ), and in immature neurons both in the SVZ and the rostral migratory stream as well as in mature neurons in the olfactory bulb (at protein level) (PubMed:26305964). Expressed in testis and in the brain, including the hippocampus, the neocortex and the cerebellum (PubMed:11573004, PubMed:24857657, PubMed:8535975). Expressed in lower- but not upper-layer primary neurons of the mature neocortex, in the hippocampal regions CA1-3 and the dentate gyrus (PubMed:24599466, PubMed:9096138). Expressed in the mitral and granule cells of the olfactory bulb, cerebral cortex, entorhinal cortex, thalamus, medial habenula, amygdala, granule cells of the cerebellum, pons, olivary nucleus, dorsal and ventral spinal cord and in dorsal root ganglia (PubMed:9096138). Expressed in motor neurons (PubMed:21389246). Isoform 4: Expressed in the brain (PubMed:22895702, PubMed:9096138). Isoform 5: Expressed in the brain (PubMed:9096138). Isoform 6: Expressed in the brain (PubMed:22895702). Isoform 7: Expressed in the brain (PubMed:22895702). Isoform 8: Expressed in the brain (PubMed:22895702). Isoform 9: Expressed in the brain (PubMed:22895702). Isoform 10: Expressed in the brain (PubMed:22895702). Isoform 11: Expressed in the brain (PubMed:22895702).</text>
</comment>
<comment type="developmental stage">
    <text evidence="17 19 25">At 14 dpc, expressed in the intermediate zone of the cortex (PubMed:9096138). At 15 dpc, high expression in the neocortex, with decreased expression at postnatal day 7 and in adulthood (PubMed:24599466). At 16 dpc and at birth, expressed in the retina, thalamus, hypothalamus, midbrain, pons, dorsal and ventral spinal cord, and the dorsal root ganglia (PubMed:9096138). At birth, expressed in the nasal epithelium, olfactory bulb, trigeminal ganglia, cerebral cortex, the pyramidal cells of the hippocampus and the sympathetic ganglia (PubMed:9096138). Widely expressed in the cerebellum at postnatal day 9 (PubMed:9096138). Isoform 4: Highly expressed in the brain at 10 dpc to 14 dpc, with decreased expression at 16 dpc and at postnatal day 8 (PubMed:9096138). Isoform 5: Highly expressed in the brain at 10 dpc, with decreased expression at 16 dpc and at postnatal day 8 (PubMed:9096138). Isoform 6: Expressed in the brain at 14 dpc (PubMed:22895702). Isoform 7: Expressed in the brain at 14 dpc (PubMed:9096138). Isoform 8: Expressed in the brain at 14 dpc (PubMed:9096138). Isoform 9: Expressed in the brain at 14 dpc (PubMed:9096138). Isoform 10: Expressed in the brain at 14 dpc, including the amygdala, hippocampus and cerebral cortex, and strong expression in the olfactory bulb and retina (PubMed:22895702). Isoform 11: Expressed in the brain at 14 dpc (PubMed:9096138).</text>
</comment>
<comment type="induction">
    <text evidence="5 16 22 23">Up-regulated by glucose and by insulin (PubMed:22387028). Up-regulated after memory training in radial arm maze experiments (PubMed:11573004). Up-regulated after sciatic nerve injury (PubMed:28111162). Up-regulated during adult neuronal stem cell differentiation (PubMed:26305964).</text>
</comment>
<comment type="domain">
    <text evidence="13">The RRM 3 domain is required for binding to poly(A) RNA, for the association with polysomes and with the EIF4F cap-binding complex and for the stimulation of translation (PubMed:20064466). The RRM 1 and RRM 2 domains may contribute to polysome association and stimulation of translation (PubMed:20064466).</text>
</comment>
<comment type="PTM">
    <text evidence="1 2">Methylated by CARM1, which leads to reduced RNA-binding activity and enhanced interaction with SMN (By similarity). Methylation at Arg-248 by CARM1 weakens protective binding to the 3'UTR of CDKN1A mRNA and down-regulates CDKN1A protein expression, thereby maintaining cells in a proliferative state (By similarity). Methylation is inhibited by NGF, which facilitates neurite outgrowth (By similarity).</text>
</comment>
<comment type="disruption phenotype">
    <text evidence="8 16 19 22">Transiently impaired neurite extensions of several cranial nerves, including glossopharyngeal nerve, hypoglossal nerve, trigeminal nerve and acousticofacial nerves in the midembryonic nervous system at 10.5 dpc, however no developmental delays of the nervous system in later-stage embryos at 14 dpc are obvious (PubMed:15764704). By postnatal weeks 4 to 8, 70-80% of the mice exhibit an abnormal clasping reflex of the hind limbs upon being suspended by the tail (PubMed:15764704). Decreased motor coordination, as impaired performance on an accelerating rotarod is observed (PubMed:15764704). Embryonic neural stem cells exhibit enhanced cell renewal capacity and decreased ability to differentiate into neurons (PubMed:15764704). Failure of neural progenitor cells to leave the cell cycle, resulting in increased apoptosis and in reduced production of postmitotic neurons (PubMed:15764704). Increased number of slowly dividing cells in the subventricular zone (PubMed:15764704). High insulin levels in pancreatic beta cells (PubMed:22387028). At 28 dpc, a decreased number of lower layer neocortical neurons is observed and lower layer neocortical neurons and CA3 hippocampal neurons exhibit a decreased dendritic complexity with fewer basal and apical branchpoints, fewer branch endings and shorter basal dendrites (PubMed:24599466). Basal branching deficiency in neocortical lower layer neurons and in hippocampal CA3 neurons persists into adulthood at 90 dpc (PubMed:24599466). Increased time spent in low-energy-expending activities and less in the high-energy activity of locomotion, indicating an anxiety response (PubMed:24599466). Decreased performance in finding a hidden platform in a water bath (Morris water maze test), suggesting difficulty in learning, lack of avoidance of the open arm in a elevated plus maze test, suggesting an aberrant response to anxiety-producing environments, and higher susceptibility to auditory-induced seizures (PubMed:24599466). RNAi-mediated knockdown in the neocortex at 13.5 dpc results in reduced neurite outgrowth (PubMed:24599466). RNAi-mediated knockdown in neural stem/progenitor cells in the adult subventricular zone impairs early neuronal differentiation (PubMed:26305964).</text>
</comment>
<comment type="miscellaneous">
    <molecule>Isoform 3</molecule>
    <text evidence="26">Produced by alternative initiation.</text>
</comment>
<comment type="miscellaneous">
    <molecule>Isoform 4</molecule>
    <text evidence="29">Produced by alternative splicing of isoform 4.</text>
</comment>
<comment type="miscellaneous">
    <molecule>Isoform 5</molecule>
    <text evidence="26">Produced by alternative initiation.</text>
</comment>
<comment type="miscellaneous">
    <molecule>Isoform 6</molecule>
    <text evidence="26">Produced by alternative initiation.</text>
</comment>
<comment type="miscellaneous">
    <molecule>Isoform 7</molecule>
    <text evidence="26">Produced by alternative initiation.</text>
</comment>
<comment type="miscellaneous">
    <molecule>Isoform 8</molecule>
    <text evidence="26">Produced by alternative initiation.</text>
</comment>
<comment type="miscellaneous">
    <molecule>Isoform 9</molecule>
    <text evidence="29">Produced by alternative splicing of isoform 1.</text>
</comment>
<comment type="miscellaneous">
    <molecule>Isoform 10</molecule>
    <text evidence="26">Produced by alternative initiation.</text>
</comment>
<comment type="similarity">
    <text evidence="29">Belongs to the RRM elav family.</text>
</comment>
<protein>
    <recommendedName>
        <fullName>ELAV-like protein 4</fullName>
    </recommendedName>
    <alternativeName>
        <fullName>Hu-antigen D</fullName>
        <shortName>HuD</shortName>
    </alternativeName>
    <alternativeName>
        <fullName>Paraneoplastic encephalomyelitis antigen HuD</fullName>
    </alternativeName>
</protein>
<feature type="chain" id="PRO_0000081584" description="ELAV-like protein 4">
    <location>
        <begin position="1"/>
        <end position="385"/>
    </location>
</feature>
<feature type="domain" description="RRM 1" evidence="3">
    <location>
        <begin position="51"/>
        <end position="129"/>
    </location>
</feature>
<feature type="domain" description="RRM 2" evidence="3">
    <location>
        <begin position="137"/>
        <end position="217"/>
    </location>
</feature>
<feature type="domain" description="RRM 3" evidence="3">
    <location>
        <begin position="302"/>
        <end position="380"/>
    </location>
</feature>
<feature type="region of interest" description="Disordered" evidence="4">
    <location>
        <begin position="12"/>
        <end position="48"/>
    </location>
</feature>
<feature type="compositionally biased region" description="Low complexity" evidence="4">
    <location>
        <begin position="18"/>
        <end position="33"/>
    </location>
</feature>
<feature type="compositionally biased region" description="Polar residues" evidence="4">
    <location>
        <begin position="34"/>
        <end position="44"/>
    </location>
</feature>
<feature type="modified residue" description="Phosphoserine" evidence="31">
    <location>
        <position position="38"/>
    </location>
</feature>
<feature type="modified residue" description="Phosphoserine" evidence="31">
    <location>
        <position position="233"/>
    </location>
</feature>
<feature type="modified residue" description="Asymmetric dimethylarginine; by CARM1; alternate" evidence="2">
    <location>
        <position position="248"/>
    </location>
</feature>
<feature type="modified residue" description="Omega-N-methylarginine; by CARM1; alternate" evidence="2">
    <location>
        <position position="248"/>
    </location>
</feature>
<feature type="splice variant" id="VSP_060291" description="In isoform 10.">
    <original>MEWNGLKM</original>
    <variation>MPNALLFQCLCSR</variation>
    <location>
        <begin position="1"/>
        <end position="8"/>
    </location>
</feature>
<feature type="splice variant" id="VSP_060284" description="In isoform 5." evidence="26">
    <original>MEWNGLKM</original>
    <variation>MRLQNQ</variation>
    <location>
        <begin position="1"/>
        <end position="8"/>
    </location>
</feature>
<feature type="splice variant" id="VSP_060285" description="In isoform 6." evidence="26">
    <original>MEWNGLKM</original>
    <variation>MEQ</variation>
    <location>
        <begin position="1"/>
        <end position="8"/>
    </location>
</feature>
<feature type="splice variant" id="VSP_060286" description="In isoform 7." evidence="26">
    <original>MEWNGLKM</original>
    <variation>MFEISRTLNAALLNNE</variation>
    <location>
        <begin position="1"/>
        <end position="8"/>
    </location>
</feature>
<feature type="splice variant" id="VSP_060287" description="In isoform 3 and isoform 4." evidence="27">
    <original>MEWNGLK</original>
    <variation>MV</variation>
    <location>
        <begin position="1"/>
        <end position="7"/>
    </location>
</feature>
<feature type="splice variant" id="VSP_060288" description="In isoform 8." evidence="26">
    <original>MEWNGLK</original>
    <variation>MGLLLLREIVINESRNCSF</variation>
    <location>
        <begin position="1"/>
        <end position="7"/>
    </location>
</feature>
<feature type="splice variant" id="VSP_060289" description="In isoform 7.">
    <location>
        <begin position="85"/>
        <end position="385"/>
    </location>
</feature>
<feature type="splice variant" id="VSP_005792" description="In isoform 2 and isoform 5." evidence="26 28">
    <location>
        <begin position="251"/>
        <end position="277"/>
    </location>
</feature>
<feature type="splice variant" id="VSP_060290" description="In isoform 4, isoform 6, isoform 8 and isoform 9." evidence="26 27">
    <location>
        <begin position="264"/>
        <end position="277"/>
    </location>
</feature>
<feature type="mutagenesis site" description="Reduced association with polysomes and reduced stimulation of translation." evidence="13">
    <location>
        <begin position="1"/>
        <end position="215"/>
    </location>
</feature>
<feature type="mutagenesis site" description="Decreased dendritic localization and decreased translation of reporter mRNA, when associated with Ala-165." evidence="21">
    <original>T</original>
    <variation>A</variation>
    <location>
        <position position="149"/>
    </location>
</feature>
<feature type="mutagenesis site" description="Decreased dendritic localization and decreased translation of reporter mRNA, when associated with Ala-149." evidence="21">
    <original>T</original>
    <variation>A</variation>
    <location>
        <position position="165"/>
    </location>
</feature>
<feature type="mutagenesis site" description="No impact on interaction with EIF4A." evidence="13">
    <original>R</original>
    <variation>A</variation>
    <location>
        <position position="277"/>
    </location>
</feature>
<feature type="mutagenesis site" description="Disrupts interaction with EIF4A and fails to stimulate translation." evidence="13">
    <original>F</original>
    <variation>A</variation>
    <location>
        <position position="278"/>
    </location>
</feature>
<feature type="mutagenesis site" description="No impact on interaction with EIF4A." evidence="13">
    <original>S</original>
    <variation>A</variation>
    <location>
        <position position="279"/>
    </location>
</feature>
<feature type="mutagenesis site" description="No impact on interaction with EIF4A." evidence="13">
    <original>P</original>
    <variation>A</variation>
    <location>
        <position position="280"/>
    </location>
</feature>
<feature type="mutagenesis site" description="Loss of association with polysomes and loss of translation stimulation." evidence="13">
    <location>
        <begin position="303"/>
        <end position="385"/>
    </location>
</feature>
<sequence length="385" mass="42368">MEWNGLKMIISTMEPQVSNGPTSNTSNGPSSNNRNCPSPMQTGAATDDSKTNLIVNYLPQNMTQEEFRSLFGSIGEIESCKLVRDKITGQSLGYGFVNYIDPKDAEKAINTLNGLRLQTKTIKVSYARPSSASIRDANLYVSGLPKTMTQKELEQLFSQYGRIITSRILVDQVTGVSRGVGFIRFDKRIEAEEAIKGLNGQKPSGATEPITVKFANNPSQKSSQALLSQLYQSPNRRYPGPLHHQAQRFRLDNLLNMAYGVKRLMSGPVPPSACPPRFSPITIDGMTSLVGMNIPGHTGTGWCIFVYNLSPDSDESVLWQLFGPFGAVNNVKVIRDFNTNKCKGFGFVTMTNYDEAAMAIASLNGYRLGDRVLQVSFKTNKAHKS</sequence>
<dbReference type="EMBL" id="D31953">
    <property type="protein sequence ID" value="BAA06723.1"/>
    <property type="molecule type" value="mRNA"/>
</dbReference>
<dbReference type="EMBL" id="AF041341">
    <property type="protein sequence ID" value="AAC40080.1"/>
    <property type="molecule type" value="mRNA"/>
</dbReference>
<dbReference type="EMBL" id="BC052451">
    <property type="protein sequence ID" value="AAH52451.2"/>
    <property type="molecule type" value="mRNA"/>
</dbReference>
<dbReference type="EMBL" id="AK079088">
    <property type="protein sequence ID" value="BAC37532.1"/>
    <property type="molecule type" value="mRNA"/>
</dbReference>
<dbReference type="EMBL" id="AL627425">
    <property type="status" value="NOT_ANNOTATED_CDS"/>
    <property type="molecule type" value="Genomic_DNA"/>
</dbReference>
<dbReference type="EMBL" id="AL627206">
    <property type="status" value="NOT_ANNOTATED_CDS"/>
    <property type="molecule type" value="Genomic_DNA"/>
</dbReference>
<dbReference type="CCDS" id="CCDS18470.1">
    <molecule id="Q61701-4"/>
</dbReference>
<dbReference type="CCDS" id="CCDS18471.1">
    <molecule id="Q61701-1"/>
</dbReference>
<dbReference type="CCDS" id="CCDS51261.1">
    <molecule id="Q61701-10"/>
</dbReference>
<dbReference type="CCDS" id="CCDS51262.1">
    <molecule id="Q61701-6"/>
</dbReference>
<dbReference type="CCDS" id="CCDS84777.1">
    <molecule id="Q61701-5"/>
</dbReference>
<dbReference type="PIR" id="JC2298">
    <property type="entry name" value="JC2298"/>
</dbReference>
<dbReference type="RefSeq" id="NP_001033787.1">
    <molecule id="Q61701-4"/>
    <property type="nucleotide sequence ID" value="NM_001038698.2"/>
</dbReference>
<dbReference type="RefSeq" id="NP_001156869.1">
    <molecule id="Q61701-6"/>
    <property type="nucleotide sequence ID" value="NM_001163397.2"/>
</dbReference>
<dbReference type="RefSeq" id="NP_001156871.1">
    <molecule id="Q61701-10"/>
    <property type="nucleotide sequence ID" value="NM_001163399.2"/>
</dbReference>
<dbReference type="RefSeq" id="NP_001334107.1">
    <molecule id="Q61701-5"/>
    <property type="nucleotide sequence ID" value="NM_001347178.1"/>
</dbReference>
<dbReference type="RefSeq" id="NP_001408083.1">
    <molecule id="Q61701-7"/>
    <property type="nucleotide sequence ID" value="NM_001421154.1"/>
</dbReference>
<dbReference type="RefSeq" id="NP_001408084.1">
    <molecule id="Q61701-2"/>
    <property type="nucleotide sequence ID" value="NM_001421155.1"/>
</dbReference>
<dbReference type="RefSeq" id="NP_001408090.1">
    <molecule id="Q61701-9"/>
    <property type="nucleotide sequence ID" value="NM_001421161.1"/>
</dbReference>
<dbReference type="RefSeq" id="NP_034618.2">
    <molecule id="Q61701-1"/>
    <property type="nucleotide sequence ID" value="NM_010488.5"/>
</dbReference>
<dbReference type="RefSeq" id="XP_006502862.1">
    <property type="nucleotide sequence ID" value="XM_006502799.3"/>
</dbReference>
<dbReference type="SMR" id="Q61701"/>
<dbReference type="BioGRID" id="200486">
    <property type="interactions" value="23"/>
</dbReference>
<dbReference type="FunCoup" id="Q61701">
    <property type="interactions" value="689"/>
</dbReference>
<dbReference type="IntAct" id="Q61701">
    <property type="interactions" value="5"/>
</dbReference>
<dbReference type="MINT" id="Q61701"/>
<dbReference type="STRING" id="10090.ENSMUSP00000102207"/>
<dbReference type="GlyGen" id="Q61701">
    <property type="glycosylation" value="1 site, 1 N-linked glycan (1 site)"/>
</dbReference>
<dbReference type="iPTMnet" id="Q61701"/>
<dbReference type="PhosphoSitePlus" id="Q61701"/>
<dbReference type="PaxDb" id="10090-ENSMUSP00000102207"/>
<dbReference type="PeptideAtlas" id="Q61701"/>
<dbReference type="ProteomicsDB" id="275737">
    <molecule id="Q61701-1"/>
</dbReference>
<dbReference type="ProteomicsDB" id="275738">
    <molecule id="Q61701-2"/>
</dbReference>
<dbReference type="ProteomicsDB" id="320612"/>
<dbReference type="ProteomicsDB" id="333003"/>
<dbReference type="ProteomicsDB" id="345023"/>
<dbReference type="ProteomicsDB" id="345265"/>
<dbReference type="ProteomicsDB" id="349412"/>
<dbReference type="ProteomicsDB" id="349699"/>
<dbReference type="ProteomicsDB" id="350897"/>
<dbReference type="Pumba" id="Q61701"/>
<dbReference type="Antibodypedia" id="3839">
    <property type="antibodies" value="255 antibodies from 30 providers"/>
</dbReference>
<dbReference type="DNASU" id="15572"/>
<dbReference type="Ensembl" id="ENSMUST00000102722.9">
    <molecule id="Q61701-10"/>
    <property type="protein sequence ID" value="ENSMUSP00000099783.3"/>
    <property type="gene ID" value="ENSMUSG00000028546.18"/>
</dbReference>
<dbReference type="Ensembl" id="ENSMUST00000102723.11">
    <molecule id="Q61701-4"/>
    <property type="protein sequence ID" value="ENSMUSP00000099784.5"/>
    <property type="gene ID" value="ENSMUSG00000028546.18"/>
</dbReference>
<dbReference type="Ensembl" id="ENSMUST00000106597.10">
    <molecule id="Q61701-1"/>
    <property type="protein sequence ID" value="ENSMUSP00000102207.4"/>
    <property type="gene ID" value="ENSMUSG00000028546.18"/>
</dbReference>
<dbReference type="Ensembl" id="ENSMUST00000106598.8">
    <molecule id="Q61701-5"/>
    <property type="protein sequence ID" value="ENSMUSP00000102208.2"/>
    <property type="gene ID" value="ENSMUSG00000028546.18"/>
</dbReference>
<dbReference type="Ensembl" id="ENSMUST00000106600.9">
    <molecule id="Q61701-9"/>
    <property type="protein sequence ID" value="ENSMUSP00000102210.3"/>
    <property type="gene ID" value="ENSMUSG00000028546.18"/>
</dbReference>
<dbReference type="Ensembl" id="ENSMUST00000106601.8">
    <molecule id="Q61701-7"/>
    <property type="protein sequence ID" value="ENSMUSP00000102212.2"/>
    <property type="gene ID" value="ENSMUSG00000028546.18"/>
</dbReference>
<dbReference type="Ensembl" id="ENSMUST00000106603.9">
    <molecule id="Q61701-6"/>
    <property type="protein sequence ID" value="ENSMUSP00000102214.3"/>
    <property type="gene ID" value="ENSMUSG00000028546.18"/>
</dbReference>
<dbReference type="Ensembl" id="ENSMUST00000142722.2">
    <molecule id="Q61701-8"/>
    <property type="protein sequence ID" value="ENSMUSP00000121828.2"/>
    <property type="gene ID" value="ENSMUSG00000028546.18"/>
</dbReference>
<dbReference type="GeneID" id="15572"/>
<dbReference type="KEGG" id="mmu:15572"/>
<dbReference type="UCSC" id="uc008ucw.1">
    <molecule id="Q61701-1"/>
    <property type="organism name" value="mouse"/>
</dbReference>
<dbReference type="UCSC" id="uc008ucx.1">
    <property type="organism name" value="mouse"/>
</dbReference>
<dbReference type="AGR" id="MGI:107427"/>
<dbReference type="CTD" id="1996"/>
<dbReference type="MGI" id="MGI:107427">
    <property type="gene designation" value="Elavl4"/>
</dbReference>
<dbReference type="VEuPathDB" id="HostDB:ENSMUSG00000028546"/>
<dbReference type="eggNOG" id="KOG0145">
    <property type="taxonomic scope" value="Eukaryota"/>
</dbReference>
<dbReference type="GeneTree" id="ENSGT00940000157399"/>
<dbReference type="HOGENOM" id="CLU_026186_2_0_1"/>
<dbReference type="InParanoid" id="Q61701"/>
<dbReference type="OMA" id="GSEWCIF"/>
<dbReference type="OrthoDB" id="266020at2759"/>
<dbReference type="PhylomeDB" id="Q61701"/>
<dbReference type="TreeFam" id="TF313377"/>
<dbReference type="BioGRID-ORCS" id="15572">
    <property type="hits" value="4 hits in 76 CRISPR screens"/>
</dbReference>
<dbReference type="CD-CODE" id="CE726F99">
    <property type="entry name" value="Postsynaptic density"/>
</dbReference>
<dbReference type="ChiTaRS" id="Elavl4">
    <property type="organism name" value="mouse"/>
</dbReference>
<dbReference type="PRO" id="PR:Q61701"/>
<dbReference type="Proteomes" id="UP000000589">
    <property type="component" value="Chromosome 4"/>
</dbReference>
<dbReference type="RNAct" id="Q61701">
    <property type="molecule type" value="protein"/>
</dbReference>
<dbReference type="Bgee" id="ENSMUSG00000028546">
    <property type="expression patterns" value="Expressed in habenula and 169 other cell types or tissues"/>
</dbReference>
<dbReference type="ExpressionAtlas" id="Q61701">
    <property type="expression patterns" value="baseline and differential"/>
</dbReference>
<dbReference type="GO" id="GO:0030424">
    <property type="term" value="C:axon"/>
    <property type="evidence" value="ECO:0000314"/>
    <property type="project" value="UniProtKB"/>
</dbReference>
<dbReference type="GO" id="GO:0005737">
    <property type="term" value="C:cytoplasm"/>
    <property type="evidence" value="ECO:0000314"/>
    <property type="project" value="UniProtKB"/>
</dbReference>
<dbReference type="GO" id="GO:0030425">
    <property type="term" value="C:dendrite"/>
    <property type="evidence" value="ECO:0000314"/>
    <property type="project" value="UniProtKB"/>
</dbReference>
<dbReference type="GO" id="GO:0030426">
    <property type="term" value="C:growth cone"/>
    <property type="evidence" value="ECO:0007669"/>
    <property type="project" value="UniProtKB-SubCell"/>
</dbReference>
<dbReference type="GO" id="GO:0043204">
    <property type="term" value="C:perikaryon"/>
    <property type="evidence" value="ECO:0007669"/>
    <property type="project" value="UniProtKB-SubCell"/>
</dbReference>
<dbReference type="GO" id="GO:1990904">
    <property type="term" value="C:ribonucleoprotein complex"/>
    <property type="evidence" value="ECO:0007669"/>
    <property type="project" value="InterPro"/>
</dbReference>
<dbReference type="GO" id="GO:0035925">
    <property type="term" value="F:mRNA 3'-UTR AU-rich region binding"/>
    <property type="evidence" value="ECO:0000250"/>
    <property type="project" value="UniProtKB"/>
</dbReference>
<dbReference type="GO" id="GO:0003730">
    <property type="term" value="F:mRNA 3'-UTR binding"/>
    <property type="evidence" value="ECO:0000250"/>
    <property type="project" value="UniProtKB"/>
</dbReference>
<dbReference type="GO" id="GO:0003729">
    <property type="term" value="F:mRNA binding"/>
    <property type="evidence" value="ECO:0000314"/>
    <property type="project" value="UniProtKB"/>
</dbReference>
<dbReference type="GO" id="GO:0008143">
    <property type="term" value="F:poly(A) binding"/>
    <property type="evidence" value="ECO:0000250"/>
    <property type="project" value="UniProtKB"/>
</dbReference>
<dbReference type="GO" id="GO:0097158">
    <property type="term" value="F:pre-mRNA intronic pyrimidine-rich binding"/>
    <property type="evidence" value="ECO:0000250"/>
    <property type="project" value="UniProtKB"/>
</dbReference>
<dbReference type="GO" id="GO:0070935">
    <property type="term" value="P:3'-UTR-mediated mRNA stabilization"/>
    <property type="evidence" value="ECO:0000250"/>
    <property type="project" value="UniProtKB"/>
</dbReference>
<dbReference type="GO" id="GO:0021895">
    <property type="term" value="P:cerebral cortex neuron differentiation"/>
    <property type="evidence" value="ECO:0000314"/>
    <property type="project" value="MGI"/>
</dbReference>
<dbReference type="GO" id="GO:0048813">
    <property type="term" value="P:dendrite morphogenesis"/>
    <property type="evidence" value="ECO:0000315"/>
    <property type="project" value="MGI"/>
</dbReference>
<dbReference type="GO" id="GO:0007612">
    <property type="term" value="P:learning"/>
    <property type="evidence" value="ECO:0000315"/>
    <property type="project" value="MGI"/>
</dbReference>
<dbReference type="GO" id="GO:0007626">
    <property type="term" value="P:locomotory behavior"/>
    <property type="evidence" value="ECO:0000315"/>
    <property type="project" value="MGI"/>
</dbReference>
<dbReference type="GO" id="GO:0006397">
    <property type="term" value="P:mRNA processing"/>
    <property type="evidence" value="ECO:0007669"/>
    <property type="project" value="UniProtKB-KW"/>
</dbReference>
<dbReference type="GO" id="GO:1905870">
    <property type="term" value="P:positive regulation of 3'-UTR-mediated mRNA stabilization"/>
    <property type="evidence" value="ECO:0000250"/>
    <property type="project" value="UniProtKB"/>
</dbReference>
<dbReference type="GO" id="GO:0006396">
    <property type="term" value="P:RNA processing"/>
    <property type="evidence" value="ECO:0000250"/>
    <property type="project" value="UniProtKB"/>
</dbReference>
<dbReference type="GO" id="GO:0008380">
    <property type="term" value="P:RNA splicing"/>
    <property type="evidence" value="ECO:0007669"/>
    <property type="project" value="UniProtKB-KW"/>
</dbReference>
<dbReference type="CDD" id="cd12652">
    <property type="entry name" value="RRM2_Hu"/>
    <property type="match status" value="1"/>
</dbReference>
<dbReference type="CDD" id="cd12656">
    <property type="entry name" value="RRM3_HuD"/>
    <property type="match status" value="1"/>
</dbReference>
<dbReference type="FunFam" id="3.30.70.330:FF:000006">
    <property type="entry name" value="ELAV-like 3"/>
    <property type="match status" value="1"/>
</dbReference>
<dbReference type="FunFam" id="3.30.70.330:FF:000005">
    <property type="entry name" value="ELAV-like protein"/>
    <property type="match status" value="1"/>
</dbReference>
<dbReference type="FunFam" id="3.30.70.330:FF:000017">
    <property type="entry name" value="ELAV-like protein"/>
    <property type="match status" value="1"/>
</dbReference>
<dbReference type="Gene3D" id="3.30.70.330">
    <property type="match status" value="3"/>
</dbReference>
<dbReference type="InterPro" id="IPR006548">
    <property type="entry name" value="ELAD_HU_SF"/>
</dbReference>
<dbReference type="InterPro" id="IPR034918">
    <property type="entry name" value="HuD_RRM3"/>
</dbReference>
<dbReference type="InterPro" id="IPR002343">
    <property type="entry name" value="Hud_Sxl_RNA"/>
</dbReference>
<dbReference type="InterPro" id="IPR012677">
    <property type="entry name" value="Nucleotide-bd_a/b_plait_sf"/>
</dbReference>
<dbReference type="InterPro" id="IPR035979">
    <property type="entry name" value="RBD_domain_sf"/>
</dbReference>
<dbReference type="InterPro" id="IPR000504">
    <property type="entry name" value="RRM_dom"/>
</dbReference>
<dbReference type="NCBIfam" id="TIGR01661">
    <property type="entry name" value="ELAV_HUD_SF"/>
    <property type="match status" value="1"/>
</dbReference>
<dbReference type="PANTHER" id="PTHR10352">
    <property type="entry name" value="EUKARYOTIC TRANSLATION INITIATION FACTOR 3 SUBUNIT G"/>
    <property type="match status" value="1"/>
</dbReference>
<dbReference type="Pfam" id="PF00076">
    <property type="entry name" value="RRM_1"/>
    <property type="match status" value="3"/>
</dbReference>
<dbReference type="PRINTS" id="PR00961">
    <property type="entry name" value="HUDSXLRNA"/>
</dbReference>
<dbReference type="SMART" id="SM00360">
    <property type="entry name" value="RRM"/>
    <property type="match status" value="3"/>
</dbReference>
<dbReference type="SUPFAM" id="SSF54928">
    <property type="entry name" value="RNA-binding domain, RBD"/>
    <property type="match status" value="2"/>
</dbReference>
<dbReference type="PROSITE" id="PS50102">
    <property type="entry name" value="RRM"/>
    <property type="match status" value="3"/>
</dbReference>
<accession>Q61701</accession>
<accession>A2A9R6</accession>
<accession>A2A9R7</accession>
<accession>A2A9R8</accession>
<accession>A2A9S0</accession>
<accession>A2A9S1</accession>
<accession>A2A9S2</accession>
<accession>A2A9S3</accession>
<accession>O55010</accession>
<accession>Q6PHZ3</accession>
<accession>Q8BVA9</accession>
<name>ELAV4_MOUSE</name>